<comment type="function">
    <text evidence="2">Serine protease inhibitor that inhibits trypsin at a molar ratio of 1:1.</text>
</comment>
<comment type="subcellular location">
    <subcellularLocation>
        <location evidence="6">Secreted</location>
    </subcellularLocation>
</comment>
<comment type="tissue specificity">
    <text evidence="6">Expressed by the venom gland.</text>
</comment>
<comment type="similarity">
    <text evidence="5">Belongs to the venom Kunitz-type family. 02 (native) subfamily.</text>
</comment>
<organism>
    <name type="scientific">Cyriopagopus hainanus</name>
    <name type="common">Chinese bird spider</name>
    <name type="synonym">Haplopelma hainanum</name>
    <dbReference type="NCBI Taxonomy" id="209901"/>
    <lineage>
        <taxon>Eukaryota</taxon>
        <taxon>Metazoa</taxon>
        <taxon>Ecdysozoa</taxon>
        <taxon>Arthropoda</taxon>
        <taxon>Chelicerata</taxon>
        <taxon>Arachnida</taxon>
        <taxon>Araneae</taxon>
        <taxon>Mygalomorphae</taxon>
        <taxon>Theraphosidae</taxon>
        <taxon>Haplopelma</taxon>
    </lineage>
</organism>
<keyword id="KW-1015">Disulfide bond</keyword>
<keyword id="KW-0646">Protease inhibitor</keyword>
<keyword id="KW-0964">Secreted</keyword>
<keyword id="KW-0722">Serine protease inhibitor</keyword>
<keyword id="KW-0732">Signal</keyword>
<sequence length="76" mass="8848">RLSVLRYYRRPDLRILPQETFEDTCRLPSDRGRCKASFERWYFNGRTCAKFIYGGCGGNGNKFPTQEACMKRCGKA</sequence>
<name>VKT17_CYRHA</name>
<proteinExistence type="evidence at transcript level"/>
<evidence type="ECO:0000250" key="1"/>
<evidence type="ECO:0000250" key="2">
    <source>
        <dbReference type="UniProtKB" id="P68425"/>
    </source>
</evidence>
<evidence type="ECO:0000255" key="3">
    <source>
        <dbReference type="PROSITE-ProRule" id="PRU00031"/>
    </source>
</evidence>
<evidence type="ECO:0000303" key="4">
    <source>
    </source>
</evidence>
<evidence type="ECO:0000305" key="5"/>
<evidence type="ECO:0000305" key="6">
    <source>
    </source>
</evidence>
<accession>P0DJ66</accession>
<feature type="signal peptide" evidence="1">
    <location>
        <begin position="1" status="less than"/>
        <end position="21"/>
    </location>
</feature>
<feature type="chain" id="PRO_0000413809" description="Kunitz-type serine protease inhibitor HNTX-03141017">
    <location>
        <begin position="22"/>
        <end position="76"/>
    </location>
</feature>
<feature type="domain" description="BPTI/Kunitz inhibitor" evidence="3">
    <location>
        <begin position="25"/>
        <end position="73"/>
    </location>
</feature>
<feature type="site" description="May bind Kv1.x/KCNA" evidence="1">
    <location>
        <position position="27"/>
    </location>
</feature>
<feature type="site" description="Reactive bond for trypsin" evidence="1">
    <location>
        <begin position="35"/>
        <end position="36"/>
    </location>
</feature>
<feature type="disulfide bond" evidence="3">
    <location>
        <begin position="25"/>
        <end position="73"/>
    </location>
</feature>
<feature type="disulfide bond" evidence="3">
    <location>
        <begin position="34"/>
        <end position="56"/>
    </location>
</feature>
<feature type="disulfide bond" evidence="3">
    <location>
        <begin position="48"/>
        <end position="69"/>
    </location>
</feature>
<feature type="non-terminal residue">
    <location>
        <position position="1"/>
    </location>
</feature>
<reference key="1">
    <citation type="journal article" date="2008" name="PLoS ONE">
        <title>Discovery of a distinct superfamily of Kunitz-type toxin (KTT) from tarantulas.</title>
        <authorList>
            <person name="Yuan C.-H."/>
            <person name="He Q.-Y."/>
            <person name="Peng K."/>
            <person name="Diao J.-B."/>
            <person name="Jiang L.-P."/>
            <person name="Tang X."/>
            <person name="Liang S.-P."/>
        </authorList>
    </citation>
    <scope>NUCLEOTIDE SEQUENCE [MRNA]</scope>
    <source>
        <tissue>Venom gland</tissue>
    </source>
</reference>
<protein>
    <recommendedName>
        <fullName evidence="4">Kunitz-type serine protease inhibitor HNTX-03141017</fullName>
    </recommendedName>
</protein>
<dbReference type="SMR" id="P0DJ66"/>
<dbReference type="GO" id="GO:0005615">
    <property type="term" value="C:extracellular space"/>
    <property type="evidence" value="ECO:0007669"/>
    <property type="project" value="TreeGrafter"/>
</dbReference>
<dbReference type="GO" id="GO:0015459">
    <property type="term" value="F:potassium channel regulator activity"/>
    <property type="evidence" value="ECO:0007669"/>
    <property type="project" value="UniProtKB-KW"/>
</dbReference>
<dbReference type="GO" id="GO:0004867">
    <property type="term" value="F:serine-type endopeptidase inhibitor activity"/>
    <property type="evidence" value="ECO:0007669"/>
    <property type="project" value="UniProtKB-KW"/>
</dbReference>
<dbReference type="GO" id="GO:0090729">
    <property type="term" value="F:toxin activity"/>
    <property type="evidence" value="ECO:0007669"/>
    <property type="project" value="UniProtKB-KW"/>
</dbReference>
<dbReference type="GO" id="GO:0044562">
    <property type="term" value="P:envenomation resulting in negative regulation of voltage-gated potassium channel activity in another organism"/>
    <property type="evidence" value="ECO:0007669"/>
    <property type="project" value="UniProtKB-ARBA"/>
</dbReference>
<dbReference type="CDD" id="cd22598">
    <property type="entry name" value="Kunitz_huwentoxin"/>
    <property type="match status" value="1"/>
</dbReference>
<dbReference type="FunFam" id="4.10.410.10:FF:000020">
    <property type="entry name" value="Collagen, type VI, alpha 3"/>
    <property type="match status" value="1"/>
</dbReference>
<dbReference type="Gene3D" id="4.10.410.10">
    <property type="entry name" value="Pancreatic trypsin inhibitor Kunitz domain"/>
    <property type="match status" value="1"/>
</dbReference>
<dbReference type="InterPro" id="IPR002223">
    <property type="entry name" value="Kunitz_BPTI"/>
</dbReference>
<dbReference type="InterPro" id="IPR036880">
    <property type="entry name" value="Kunitz_BPTI_sf"/>
</dbReference>
<dbReference type="InterPro" id="IPR020901">
    <property type="entry name" value="Prtase_inh_Kunz-CS"/>
</dbReference>
<dbReference type="InterPro" id="IPR050098">
    <property type="entry name" value="TFPI/VKTCI-like"/>
</dbReference>
<dbReference type="PANTHER" id="PTHR10083:SF374">
    <property type="entry name" value="BPTI_KUNITZ INHIBITOR DOMAIN-CONTAINING PROTEIN"/>
    <property type="match status" value="1"/>
</dbReference>
<dbReference type="PANTHER" id="PTHR10083">
    <property type="entry name" value="KUNITZ-TYPE PROTEASE INHIBITOR-RELATED"/>
    <property type="match status" value="1"/>
</dbReference>
<dbReference type="Pfam" id="PF00014">
    <property type="entry name" value="Kunitz_BPTI"/>
    <property type="match status" value="1"/>
</dbReference>
<dbReference type="PRINTS" id="PR00759">
    <property type="entry name" value="BASICPTASE"/>
</dbReference>
<dbReference type="SMART" id="SM00131">
    <property type="entry name" value="KU"/>
    <property type="match status" value="1"/>
</dbReference>
<dbReference type="SUPFAM" id="SSF57362">
    <property type="entry name" value="BPTI-like"/>
    <property type="match status" value="1"/>
</dbReference>
<dbReference type="PROSITE" id="PS00280">
    <property type="entry name" value="BPTI_KUNITZ_1"/>
    <property type="match status" value="1"/>
</dbReference>
<dbReference type="PROSITE" id="PS50279">
    <property type="entry name" value="BPTI_KUNITZ_2"/>
    <property type="match status" value="1"/>
</dbReference>